<proteinExistence type="inferred from homology"/>
<dbReference type="EC" id="2.4.2.29" evidence="1"/>
<dbReference type="EMBL" id="CP000512">
    <property type="protein sequence ID" value="ABM35018.1"/>
    <property type="molecule type" value="Genomic_DNA"/>
</dbReference>
<dbReference type="RefSeq" id="WP_011797488.1">
    <property type="nucleotide sequence ID" value="NC_008752.1"/>
</dbReference>
<dbReference type="SMR" id="A1TVN0"/>
<dbReference type="STRING" id="397945.Aave_4479"/>
<dbReference type="GeneID" id="79789459"/>
<dbReference type="KEGG" id="aav:Aave_4479"/>
<dbReference type="eggNOG" id="COG0343">
    <property type="taxonomic scope" value="Bacteria"/>
</dbReference>
<dbReference type="HOGENOM" id="CLU_022060_0_1_4"/>
<dbReference type="OrthoDB" id="9805417at2"/>
<dbReference type="UniPathway" id="UPA00392"/>
<dbReference type="Proteomes" id="UP000002596">
    <property type="component" value="Chromosome"/>
</dbReference>
<dbReference type="GO" id="GO:0005829">
    <property type="term" value="C:cytosol"/>
    <property type="evidence" value="ECO:0007669"/>
    <property type="project" value="TreeGrafter"/>
</dbReference>
<dbReference type="GO" id="GO:0046872">
    <property type="term" value="F:metal ion binding"/>
    <property type="evidence" value="ECO:0007669"/>
    <property type="project" value="UniProtKB-KW"/>
</dbReference>
<dbReference type="GO" id="GO:0008479">
    <property type="term" value="F:tRNA-guanosine(34) queuine transglycosylase activity"/>
    <property type="evidence" value="ECO:0007669"/>
    <property type="project" value="UniProtKB-UniRule"/>
</dbReference>
<dbReference type="GO" id="GO:0008616">
    <property type="term" value="P:queuosine biosynthetic process"/>
    <property type="evidence" value="ECO:0007669"/>
    <property type="project" value="UniProtKB-UniRule"/>
</dbReference>
<dbReference type="GO" id="GO:0002099">
    <property type="term" value="P:tRNA wobble guanine modification"/>
    <property type="evidence" value="ECO:0007669"/>
    <property type="project" value="TreeGrafter"/>
</dbReference>
<dbReference type="GO" id="GO:0101030">
    <property type="term" value="P:tRNA-guanine transglycosylation"/>
    <property type="evidence" value="ECO:0007669"/>
    <property type="project" value="InterPro"/>
</dbReference>
<dbReference type="FunFam" id="3.20.20.105:FF:000001">
    <property type="entry name" value="Queuine tRNA-ribosyltransferase"/>
    <property type="match status" value="1"/>
</dbReference>
<dbReference type="Gene3D" id="3.20.20.105">
    <property type="entry name" value="Queuine tRNA-ribosyltransferase-like"/>
    <property type="match status" value="1"/>
</dbReference>
<dbReference type="HAMAP" id="MF_00168">
    <property type="entry name" value="Q_tRNA_Tgt"/>
    <property type="match status" value="1"/>
</dbReference>
<dbReference type="InterPro" id="IPR050076">
    <property type="entry name" value="ArchSynthase1/Queuine_TRR"/>
</dbReference>
<dbReference type="InterPro" id="IPR004803">
    <property type="entry name" value="TGT"/>
</dbReference>
<dbReference type="InterPro" id="IPR036511">
    <property type="entry name" value="TGT-like_sf"/>
</dbReference>
<dbReference type="InterPro" id="IPR002616">
    <property type="entry name" value="tRNA_ribo_trans-like"/>
</dbReference>
<dbReference type="NCBIfam" id="TIGR00430">
    <property type="entry name" value="Q_tRNA_tgt"/>
    <property type="match status" value="1"/>
</dbReference>
<dbReference type="NCBIfam" id="TIGR00449">
    <property type="entry name" value="tgt_general"/>
    <property type="match status" value="1"/>
</dbReference>
<dbReference type="PANTHER" id="PTHR46499">
    <property type="entry name" value="QUEUINE TRNA-RIBOSYLTRANSFERASE"/>
    <property type="match status" value="1"/>
</dbReference>
<dbReference type="PANTHER" id="PTHR46499:SF1">
    <property type="entry name" value="QUEUINE TRNA-RIBOSYLTRANSFERASE"/>
    <property type="match status" value="1"/>
</dbReference>
<dbReference type="Pfam" id="PF01702">
    <property type="entry name" value="TGT"/>
    <property type="match status" value="1"/>
</dbReference>
<dbReference type="SUPFAM" id="SSF51713">
    <property type="entry name" value="tRNA-guanine transglycosylase"/>
    <property type="match status" value="1"/>
</dbReference>
<feature type="chain" id="PRO_1000058273" description="Queuine tRNA-ribosyltransferase">
    <location>
        <begin position="1"/>
        <end position="390"/>
    </location>
</feature>
<feature type="region of interest" description="RNA binding" evidence="1">
    <location>
        <begin position="253"/>
        <end position="259"/>
    </location>
</feature>
<feature type="region of interest" description="RNA binding; important for wobble base 34 recognition" evidence="1">
    <location>
        <begin position="277"/>
        <end position="281"/>
    </location>
</feature>
<feature type="active site" description="Proton acceptor" evidence="1">
    <location>
        <position position="92"/>
    </location>
</feature>
<feature type="active site" description="Nucleophile" evidence="1">
    <location>
        <position position="272"/>
    </location>
</feature>
<feature type="binding site" evidence="1">
    <location>
        <begin position="92"/>
        <end position="96"/>
    </location>
    <ligand>
        <name>substrate</name>
    </ligand>
</feature>
<feature type="binding site" evidence="1">
    <location>
        <position position="146"/>
    </location>
    <ligand>
        <name>substrate</name>
    </ligand>
</feature>
<feature type="binding site" evidence="1">
    <location>
        <position position="195"/>
    </location>
    <ligand>
        <name>substrate</name>
    </ligand>
</feature>
<feature type="binding site" evidence="1">
    <location>
        <position position="222"/>
    </location>
    <ligand>
        <name>substrate</name>
    </ligand>
</feature>
<feature type="binding site" evidence="1">
    <location>
        <position position="310"/>
    </location>
    <ligand>
        <name>Zn(2+)</name>
        <dbReference type="ChEBI" id="CHEBI:29105"/>
    </ligand>
</feature>
<feature type="binding site" evidence="1">
    <location>
        <position position="312"/>
    </location>
    <ligand>
        <name>Zn(2+)</name>
        <dbReference type="ChEBI" id="CHEBI:29105"/>
    </ligand>
</feature>
<feature type="binding site" evidence="1">
    <location>
        <position position="315"/>
    </location>
    <ligand>
        <name>Zn(2+)</name>
        <dbReference type="ChEBI" id="CHEBI:29105"/>
    </ligand>
</feature>
<feature type="binding site" evidence="1">
    <location>
        <position position="354"/>
    </location>
    <ligand>
        <name>Zn(2+)</name>
        <dbReference type="ChEBI" id="CHEBI:29105"/>
    </ligand>
</feature>
<protein>
    <recommendedName>
        <fullName evidence="1">Queuine tRNA-ribosyltransferase</fullName>
        <ecNumber evidence="1">2.4.2.29</ecNumber>
    </recommendedName>
    <alternativeName>
        <fullName evidence="1">Guanine insertion enzyme</fullName>
    </alternativeName>
    <alternativeName>
        <fullName evidence="1">tRNA-guanine transglycosylase</fullName>
    </alternativeName>
</protein>
<evidence type="ECO:0000255" key="1">
    <source>
        <dbReference type="HAMAP-Rule" id="MF_00168"/>
    </source>
</evidence>
<name>TGT_PARC0</name>
<accession>A1TVN0</accession>
<sequence>MLQFELLATDPASHARRGTLTLNHGVVQTPIFMPVGTYGTVKGVMPRSLHEMGAQIILSNTFHLWMRPGLDVMQSFGGLHGFEQWNKPILTDSGGFQVWSLGAMRKITEEGVHFASPVNGDKLFMSPEVSMQIQTVLNSDIVMQLDECTPYETKGHKTTEAEARKSMEMSLRWARRSQDEFHRLGNPNALFGIVQGGMYKNLRQESLERLVEMDFPGYAVGGVSVGEPKDEMLDIMAHTPHRLPAHKPRYLMGVGTPEDLVQGVADGVDMFDCVMPTRNARNGTIFTRFGDLKIRNARHKADHQPLDPTCTCHACAGTEGVAWADGGRGGFSRAYLHHLDRCGEMLGPMLTTVHNLHYYLNLMREIRESLDAGRFGEFRARFAADRAQGV</sequence>
<reference key="1">
    <citation type="submission" date="2006-12" db="EMBL/GenBank/DDBJ databases">
        <title>Complete sequence of Acidovorax avenae subsp. citrulli AAC00-1.</title>
        <authorList>
            <person name="Copeland A."/>
            <person name="Lucas S."/>
            <person name="Lapidus A."/>
            <person name="Barry K."/>
            <person name="Detter J.C."/>
            <person name="Glavina del Rio T."/>
            <person name="Dalin E."/>
            <person name="Tice H."/>
            <person name="Pitluck S."/>
            <person name="Kiss H."/>
            <person name="Brettin T."/>
            <person name="Bruce D."/>
            <person name="Han C."/>
            <person name="Tapia R."/>
            <person name="Gilna P."/>
            <person name="Schmutz J."/>
            <person name="Larimer F."/>
            <person name="Land M."/>
            <person name="Hauser L."/>
            <person name="Kyrpides N."/>
            <person name="Kim E."/>
            <person name="Stahl D."/>
            <person name="Richardson P."/>
        </authorList>
    </citation>
    <scope>NUCLEOTIDE SEQUENCE [LARGE SCALE GENOMIC DNA]</scope>
    <source>
        <strain>AAC00-1</strain>
    </source>
</reference>
<organism>
    <name type="scientific">Paracidovorax citrulli (strain AAC00-1)</name>
    <name type="common">Acidovorax citrulli</name>
    <dbReference type="NCBI Taxonomy" id="397945"/>
    <lineage>
        <taxon>Bacteria</taxon>
        <taxon>Pseudomonadati</taxon>
        <taxon>Pseudomonadota</taxon>
        <taxon>Betaproteobacteria</taxon>
        <taxon>Burkholderiales</taxon>
        <taxon>Comamonadaceae</taxon>
        <taxon>Paracidovorax</taxon>
    </lineage>
</organism>
<comment type="function">
    <text evidence="1">Catalyzes the base-exchange of a guanine (G) residue with the queuine precursor 7-aminomethyl-7-deazaguanine (PreQ1) at position 34 (anticodon wobble position) in tRNAs with GU(N) anticodons (tRNA-Asp, -Asn, -His and -Tyr). Catalysis occurs through a double-displacement mechanism. The nucleophile active site attacks the C1' of nucleotide 34 to detach the guanine base from the RNA, forming a covalent enzyme-RNA intermediate. The proton acceptor active site deprotonates the incoming PreQ1, allowing a nucleophilic attack on the C1' of the ribose to form the product. After dissociation, two additional enzymatic reactions on the tRNA convert PreQ1 to queuine (Q), resulting in the hypermodified nucleoside queuosine (7-(((4,5-cis-dihydroxy-2-cyclopenten-1-yl)amino)methyl)-7-deazaguanosine).</text>
</comment>
<comment type="catalytic activity">
    <reaction evidence="1">
        <text>7-aminomethyl-7-carbaguanine + guanosine(34) in tRNA = 7-aminomethyl-7-carbaguanosine(34) in tRNA + guanine</text>
        <dbReference type="Rhea" id="RHEA:24104"/>
        <dbReference type="Rhea" id="RHEA-COMP:10341"/>
        <dbReference type="Rhea" id="RHEA-COMP:10342"/>
        <dbReference type="ChEBI" id="CHEBI:16235"/>
        <dbReference type="ChEBI" id="CHEBI:58703"/>
        <dbReference type="ChEBI" id="CHEBI:74269"/>
        <dbReference type="ChEBI" id="CHEBI:82833"/>
        <dbReference type="EC" id="2.4.2.29"/>
    </reaction>
</comment>
<comment type="cofactor">
    <cofactor evidence="1">
        <name>Zn(2+)</name>
        <dbReference type="ChEBI" id="CHEBI:29105"/>
    </cofactor>
    <text evidence="1">Binds 1 zinc ion per subunit.</text>
</comment>
<comment type="pathway">
    <text evidence="1">tRNA modification; tRNA-queuosine biosynthesis.</text>
</comment>
<comment type="subunit">
    <text evidence="1">Homodimer. Within each dimer, one monomer is responsible for RNA recognition and catalysis, while the other monomer binds to the replacement base PreQ1.</text>
</comment>
<comment type="similarity">
    <text evidence="1">Belongs to the queuine tRNA-ribosyltransferase family.</text>
</comment>
<keyword id="KW-0328">Glycosyltransferase</keyword>
<keyword id="KW-0479">Metal-binding</keyword>
<keyword id="KW-0671">Queuosine biosynthesis</keyword>
<keyword id="KW-0808">Transferase</keyword>
<keyword id="KW-0819">tRNA processing</keyword>
<keyword id="KW-0862">Zinc</keyword>
<gene>
    <name evidence="1" type="primary">tgt</name>
    <name type="ordered locus">Aave_4479</name>
</gene>